<evidence type="ECO:0000255" key="1">
    <source>
        <dbReference type="PROSITE-ProRule" id="PRU00631"/>
    </source>
</evidence>
<accession>Q91FK9</accession>
<protein>
    <recommendedName>
        <fullName>Putative KilA-N domain-containing protein 315L</fullName>
    </recommendedName>
</protein>
<sequence>MASLNDICYEKIKDNFYYGLFRDFKLVVDKNTECFNATKLCNSGGKQFRQWTRLEKSKKLMEYYSRRGSQQMYEIKGDNKDQLVTQTTGTYAPIDFFEDIKRWIQLPKASSASGVVYVVTTSILQVHNVFKIGYTKNFEERLKTFNDYRHSLEPQFFAVAIYDTDNAKKLETTIHKKLKDFRSEGEFFQVELSVIKEAFLKEDCCLKDLDYEEDHSNSFTDLNDKLKTLNII</sequence>
<keyword id="KW-1185">Reference proteome</keyword>
<name>315L_IIV6</name>
<organismHost>
    <name type="scientific">Acheta domesticus</name>
    <name type="common">House cricket</name>
    <dbReference type="NCBI Taxonomy" id="6997"/>
</organismHost>
<organismHost>
    <name type="scientific">Chilo suppressalis</name>
    <name type="common">Asiatic rice borer moth</name>
    <dbReference type="NCBI Taxonomy" id="168631"/>
</organismHost>
<organismHost>
    <name type="scientific">Gryllus bimaculatus</name>
    <name type="common">Two-spotted cricket</name>
    <dbReference type="NCBI Taxonomy" id="6999"/>
</organismHost>
<organismHost>
    <name type="scientific">Gryllus campestris</name>
    <dbReference type="NCBI Taxonomy" id="58607"/>
</organismHost>
<organismHost>
    <name type="scientific">Spodoptera frugiperda</name>
    <name type="common">Fall armyworm</name>
    <dbReference type="NCBI Taxonomy" id="7108"/>
</organismHost>
<feature type="chain" id="PRO_0000377856" description="Putative KilA-N domain-containing protein 315L">
    <location>
        <begin position="1"/>
        <end position="232"/>
    </location>
</feature>
<feature type="domain" description="KilA-N" evidence="1">
    <location>
        <begin position="15"/>
        <end position="119"/>
    </location>
</feature>
<gene>
    <name type="ORF">IIV6-315L</name>
</gene>
<dbReference type="EMBL" id="AF303741">
    <property type="protein sequence ID" value="AAK82176.1"/>
    <property type="molecule type" value="Genomic_DNA"/>
</dbReference>
<dbReference type="RefSeq" id="NP_149778.1">
    <property type="nucleotide sequence ID" value="NC_003038.1"/>
</dbReference>
<dbReference type="SMR" id="Q91FK9"/>
<dbReference type="KEGG" id="vg:1733403"/>
<dbReference type="OrthoDB" id="28205at10239"/>
<dbReference type="Proteomes" id="UP000001359">
    <property type="component" value="Genome"/>
</dbReference>
<dbReference type="InterPro" id="IPR018004">
    <property type="entry name" value="KilA/APSES_HTH"/>
</dbReference>
<dbReference type="InterPro" id="IPR017880">
    <property type="entry name" value="KilA_N"/>
</dbReference>
<dbReference type="InterPro" id="IPR018306">
    <property type="entry name" value="Phage_T5_Orf172_DNA-bd"/>
</dbReference>
<dbReference type="Pfam" id="PF04383">
    <property type="entry name" value="KilA-N"/>
    <property type="match status" value="1"/>
</dbReference>
<dbReference type="Pfam" id="PF13455">
    <property type="entry name" value="MUG113"/>
    <property type="match status" value="1"/>
</dbReference>
<dbReference type="SMART" id="SM00974">
    <property type="entry name" value="T5orf172"/>
    <property type="match status" value="1"/>
</dbReference>
<dbReference type="PROSITE" id="PS51301">
    <property type="entry name" value="KILA_N"/>
    <property type="match status" value="1"/>
</dbReference>
<proteinExistence type="predicted"/>
<reference key="1">
    <citation type="journal article" date="2001" name="Virology">
        <title>Analysis of the first complete DNA sequence of an invertebrate iridovirus: coding strategy of the genome of Chilo iridescent virus.</title>
        <authorList>
            <person name="Jakob N.J."/>
            <person name="Mueller K."/>
            <person name="Bahr U."/>
            <person name="Darai G."/>
        </authorList>
    </citation>
    <scope>NUCLEOTIDE SEQUENCE [LARGE SCALE GENOMIC DNA]</scope>
</reference>
<reference key="2">
    <citation type="journal article" date="2007" name="Virol. J.">
        <title>Comparative genomic analysis of the family Iridoviridae: re-annotating and defining the core set of iridovirus genes.</title>
        <authorList>
            <person name="Eaton H.E."/>
            <person name="Metcalf J."/>
            <person name="Penny E."/>
            <person name="Tcherepanov V."/>
            <person name="Upton C."/>
            <person name="Brunetti C.R."/>
        </authorList>
    </citation>
    <scope>GENOME REANNOTATION</scope>
</reference>
<organism>
    <name type="scientific">Invertebrate iridescent virus 6</name>
    <name type="common">IIV-6</name>
    <name type="synonym">Chilo iridescent virus</name>
    <dbReference type="NCBI Taxonomy" id="176652"/>
    <lineage>
        <taxon>Viruses</taxon>
        <taxon>Varidnaviria</taxon>
        <taxon>Bamfordvirae</taxon>
        <taxon>Nucleocytoviricota</taxon>
        <taxon>Megaviricetes</taxon>
        <taxon>Pimascovirales</taxon>
        <taxon>Iridoviridae</taxon>
        <taxon>Betairidovirinae</taxon>
        <taxon>Iridovirus</taxon>
    </lineage>
</organism>